<accession>A9AES0</accession>
<name>MINC_BURM1</name>
<reference key="1">
    <citation type="submission" date="2007-10" db="EMBL/GenBank/DDBJ databases">
        <title>Complete sequence of chromosome 1 of Burkholderia multivorans ATCC 17616.</title>
        <authorList>
            <person name="Copeland A."/>
            <person name="Lucas S."/>
            <person name="Lapidus A."/>
            <person name="Barry K."/>
            <person name="Glavina del Rio T."/>
            <person name="Dalin E."/>
            <person name="Tice H."/>
            <person name="Pitluck S."/>
            <person name="Chain P."/>
            <person name="Malfatti S."/>
            <person name="Shin M."/>
            <person name="Vergez L."/>
            <person name="Schmutz J."/>
            <person name="Larimer F."/>
            <person name="Land M."/>
            <person name="Hauser L."/>
            <person name="Kyrpides N."/>
            <person name="Kim E."/>
            <person name="Tiedje J."/>
            <person name="Richardson P."/>
        </authorList>
    </citation>
    <scope>NUCLEOTIDE SEQUENCE [LARGE SCALE GENOMIC DNA]</scope>
    <source>
        <strain>ATCC 17616 / 249</strain>
    </source>
</reference>
<reference key="2">
    <citation type="submission" date="2007-04" db="EMBL/GenBank/DDBJ databases">
        <title>Complete genome sequence of Burkholderia multivorans ATCC 17616.</title>
        <authorList>
            <person name="Ohtsubo Y."/>
            <person name="Yamashita A."/>
            <person name="Kurokawa K."/>
            <person name="Takami H."/>
            <person name="Yuhara S."/>
            <person name="Nishiyama E."/>
            <person name="Endo R."/>
            <person name="Miyazaki R."/>
            <person name="Ono A."/>
            <person name="Yano K."/>
            <person name="Ito M."/>
            <person name="Sota M."/>
            <person name="Yuji N."/>
            <person name="Hattori M."/>
            <person name="Tsuda M."/>
        </authorList>
    </citation>
    <scope>NUCLEOTIDE SEQUENCE [LARGE SCALE GENOMIC DNA]</scope>
    <source>
        <strain>ATCC 17616 / 249</strain>
    </source>
</reference>
<protein>
    <recommendedName>
        <fullName evidence="1">Probable septum site-determining protein MinC</fullName>
    </recommendedName>
</protein>
<sequence length="257" mass="27522">MSLKKSPFFELRSGSVDTLLFTVKTTDLDALRAELVKRFEATPEFFADDVVAIDVRRLADGERVALADIRQMLSDVRMRPVGVVALATQGWATEAGLPLLEARDRRAPAAKAADEAEPVAAPAVEAAAAPAAEPTPEPGAASQPAGVQTLVIDRPLRSGQQIYAKGDLVVLAPVSHGAEIIAEGNIHIYAPLRGRALAGVHGNHDARIFCTCLEPELISIAGIYRTTENPLPADVLGKSVQIRLEEEKLMIEPLRLT</sequence>
<evidence type="ECO:0000255" key="1">
    <source>
        <dbReference type="HAMAP-Rule" id="MF_00267"/>
    </source>
</evidence>
<evidence type="ECO:0000256" key="2">
    <source>
        <dbReference type="SAM" id="MobiDB-lite"/>
    </source>
</evidence>
<dbReference type="EMBL" id="CP000868">
    <property type="protein sequence ID" value="ABX16101.1"/>
    <property type="molecule type" value="Genomic_DNA"/>
</dbReference>
<dbReference type="EMBL" id="AP009385">
    <property type="protein sequence ID" value="BAG42777.1"/>
    <property type="molecule type" value="Genomic_DNA"/>
</dbReference>
<dbReference type="RefSeq" id="WP_012213929.1">
    <property type="nucleotide sequence ID" value="NC_010084.1"/>
</dbReference>
<dbReference type="SMR" id="A9AES0"/>
<dbReference type="STRING" id="395019.BMULJ_00818"/>
<dbReference type="KEGG" id="bmj:BMULJ_00818"/>
<dbReference type="KEGG" id="bmu:Bmul_2416"/>
<dbReference type="eggNOG" id="COG0850">
    <property type="taxonomic scope" value="Bacteria"/>
</dbReference>
<dbReference type="HOGENOM" id="CLU_067812_0_1_4"/>
<dbReference type="Proteomes" id="UP000008815">
    <property type="component" value="Chromosome 1"/>
</dbReference>
<dbReference type="GO" id="GO:0000902">
    <property type="term" value="P:cell morphogenesis"/>
    <property type="evidence" value="ECO:0007669"/>
    <property type="project" value="InterPro"/>
</dbReference>
<dbReference type="GO" id="GO:0000917">
    <property type="term" value="P:division septum assembly"/>
    <property type="evidence" value="ECO:0007669"/>
    <property type="project" value="UniProtKB-KW"/>
</dbReference>
<dbReference type="GO" id="GO:0051302">
    <property type="term" value="P:regulation of cell division"/>
    <property type="evidence" value="ECO:0007669"/>
    <property type="project" value="InterPro"/>
</dbReference>
<dbReference type="GO" id="GO:1901891">
    <property type="term" value="P:regulation of cell septum assembly"/>
    <property type="evidence" value="ECO:0007669"/>
    <property type="project" value="InterPro"/>
</dbReference>
<dbReference type="Gene3D" id="2.160.20.70">
    <property type="match status" value="1"/>
</dbReference>
<dbReference type="Gene3D" id="3.30.70.260">
    <property type="match status" value="1"/>
</dbReference>
<dbReference type="HAMAP" id="MF_00267">
    <property type="entry name" value="MinC"/>
    <property type="match status" value="1"/>
</dbReference>
<dbReference type="InterPro" id="IPR016098">
    <property type="entry name" value="CAP/MinC_C"/>
</dbReference>
<dbReference type="InterPro" id="IPR013033">
    <property type="entry name" value="MinC"/>
</dbReference>
<dbReference type="InterPro" id="IPR036145">
    <property type="entry name" value="MinC_C_sf"/>
</dbReference>
<dbReference type="InterPro" id="IPR007874">
    <property type="entry name" value="MinC_N"/>
</dbReference>
<dbReference type="InterPro" id="IPR005526">
    <property type="entry name" value="Septum_form_inhib_MinC_C"/>
</dbReference>
<dbReference type="NCBIfam" id="TIGR01222">
    <property type="entry name" value="minC"/>
    <property type="match status" value="1"/>
</dbReference>
<dbReference type="PANTHER" id="PTHR34108">
    <property type="entry name" value="SEPTUM SITE-DETERMINING PROTEIN MINC"/>
    <property type="match status" value="1"/>
</dbReference>
<dbReference type="PANTHER" id="PTHR34108:SF1">
    <property type="entry name" value="SEPTUM SITE-DETERMINING PROTEIN MINC"/>
    <property type="match status" value="1"/>
</dbReference>
<dbReference type="Pfam" id="PF03775">
    <property type="entry name" value="MinC_C"/>
    <property type="match status" value="1"/>
</dbReference>
<dbReference type="Pfam" id="PF05209">
    <property type="entry name" value="MinC_N"/>
    <property type="match status" value="1"/>
</dbReference>
<dbReference type="SUPFAM" id="SSF63848">
    <property type="entry name" value="Cell-division inhibitor MinC, C-terminal domain"/>
    <property type="match status" value="1"/>
</dbReference>
<proteinExistence type="inferred from homology"/>
<keyword id="KW-0131">Cell cycle</keyword>
<keyword id="KW-0132">Cell division</keyword>
<keyword id="KW-1185">Reference proteome</keyword>
<keyword id="KW-0717">Septation</keyword>
<comment type="function">
    <text evidence="1">Cell division inhibitor that blocks the formation of polar Z ring septums. Rapidly oscillates between the poles of the cell to destabilize FtsZ filaments that have formed before they mature into polar Z rings. Prevents FtsZ polymerization.</text>
</comment>
<comment type="subunit">
    <text evidence="1">Interacts with MinD and FtsZ.</text>
</comment>
<comment type="similarity">
    <text evidence="1">Belongs to the MinC family.</text>
</comment>
<organism>
    <name type="scientific">Burkholderia multivorans (strain ATCC 17616 / 249)</name>
    <dbReference type="NCBI Taxonomy" id="395019"/>
    <lineage>
        <taxon>Bacteria</taxon>
        <taxon>Pseudomonadati</taxon>
        <taxon>Pseudomonadota</taxon>
        <taxon>Betaproteobacteria</taxon>
        <taxon>Burkholderiales</taxon>
        <taxon>Burkholderiaceae</taxon>
        <taxon>Burkholderia</taxon>
        <taxon>Burkholderia cepacia complex</taxon>
    </lineage>
</organism>
<feature type="chain" id="PRO_1000114272" description="Probable septum site-determining protein MinC">
    <location>
        <begin position="1"/>
        <end position="257"/>
    </location>
</feature>
<feature type="region of interest" description="Disordered" evidence="2">
    <location>
        <begin position="123"/>
        <end position="144"/>
    </location>
</feature>
<feature type="compositionally biased region" description="Low complexity" evidence="2">
    <location>
        <begin position="123"/>
        <end position="141"/>
    </location>
</feature>
<gene>
    <name evidence="1" type="primary">minC</name>
    <name type="ordered locus">Bmul_2416</name>
    <name type="ordered locus">BMULJ_00818</name>
</gene>